<organism>
    <name type="scientific">Rattus norvegicus</name>
    <name type="common">Rat</name>
    <dbReference type="NCBI Taxonomy" id="10116"/>
    <lineage>
        <taxon>Eukaryota</taxon>
        <taxon>Metazoa</taxon>
        <taxon>Chordata</taxon>
        <taxon>Craniata</taxon>
        <taxon>Vertebrata</taxon>
        <taxon>Euteleostomi</taxon>
        <taxon>Mammalia</taxon>
        <taxon>Eutheria</taxon>
        <taxon>Euarchontoglires</taxon>
        <taxon>Glires</taxon>
        <taxon>Rodentia</taxon>
        <taxon>Myomorpha</taxon>
        <taxon>Muroidea</taxon>
        <taxon>Muridae</taxon>
        <taxon>Murinae</taxon>
        <taxon>Rattus</taxon>
    </lineage>
</organism>
<protein>
    <recommendedName>
        <fullName>BTB/POZ domain-containing protein 9</fullName>
    </recommendedName>
</protein>
<reference key="1">
    <citation type="journal article" date="2004" name="Genome Res.">
        <title>The status, quality, and expansion of the NIH full-length cDNA project: the Mammalian Gene Collection (MGC).</title>
        <authorList>
            <consortium name="The MGC Project Team"/>
        </authorList>
    </citation>
    <scope>NUCLEOTIDE SEQUENCE [LARGE SCALE MRNA]</scope>
    <source>
        <tissue>Testis</tissue>
    </source>
</reference>
<reference key="2">
    <citation type="journal article" date="2012" name="Curr. Biol.">
        <title>Sleep fragmentation and motor restlessness in a Drosophila model of Restless Legs Syndrome.</title>
        <authorList>
            <person name="Freeman A."/>
            <person name="Pranski E."/>
            <person name="Miller R.D."/>
            <person name="Radmard S."/>
            <person name="Bernhard D."/>
            <person name="Jinnah H.A."/>
            <person name="Betarbet R."/>
            <person name="Rye D.B."/>
            <person name="Sanyal S."/>
        </authorList>
    </citation>
    <scope>TISSUE SPECIFICITY</scope>
</reference>
<sequence>MSNSHPLRPFTAVGEIDHVHILSEHIGALLIGEEYGDVTFVVEKKRFPAHRVILAARCQYFRALLYGGMRESQPEAEIPLQDTTAEAFTMLLRYIYTGRATLTDEKEEVLLDFLSLAHKYGFPELEDSTSEYLCTILNIQNVCMTFDVASLYSLPKLTCMCCMFMDRNAQEVLASDGFLSLSKTALLNIVLRDSFAAPEKDIFLALLNWCKHNAKENHAEIMQAVRLPLMSLTELLNVVRPSGLLSPDAILDAIKVRSESRDMDLNYRGMLIPEENIATMKYGAQVVKGELKSALLDGDTQNYDLDHGFSRHPIDDDCRSGIEIKLGQPSIINHIRLLLWDRDSRSYSYFIEVSMDELDWIRVIDHSHYLCRSWQKLYFPARVCRYIRIVGTHNTVNKIFHIVAFECMFTNKAFTLEKGLIAPMENVATIADCASVIEGVSRSRNALLNGDTKNYDWDSGYTCHQLGSGAIVVQLAQPYMIGSIRLLLWDCDDRSYSYYVEVSTNQQQWTMVADRTKVSCKSWQSVTFERQPASFIRIVGTHNTANEVFHCVHFECPEQQSTQKEDSSEEPGTGDLSTPSQQLDPHAPRAPSASSLPPSPGPNLHSPNQQNQ</sequence>
<name>BTBD9_RAT</name>
<proteinExistence type="evidence at protein level"/>
<evidence type="ECO:0000255" key="1">
    <source>
        <dbReference type="PROSITE-ProRule" id="PRU00037"/>
    </source>
</evidence>
<evidence type="ECO:0000256" key="2">
    <source>
        <dbReference type="SAM" id="MobiDB-lite"/>
    </source>
</evidence>
<evidence type="ECO:0000269" key="3">
    <source>
    </source>
</evidence>
<keyword id="KW-1185">Reference proteome</keyword>
<dbReference type="EMBL" id="BC087068">
    <property type="protein sequence ID" value="AAH87068.1"/>
    <property type="molecule type" value="mRNA"/>
</dbReference>
<dbReference type="RefSeq" id="NP_001013091.1">
    <property type="nucleotide sequence ID" value="NM_001013073.2"/>
</dbReference>
<dbReference type="RefSeq" id="NP_001421502.1">
    <property type="nucleotide sequence ID" value="NM_001434573.1"/>
</dbReference>
<dbReference type="RefSeq" id="XP_006256247.1">
    <property type="nucleotide sequence ID" value="XM_006256185.3"/>
</dbReference>
<dbReference type="SMR" id="Q5PQR3"/>
<dbReference type="FunCoup" id="Q5PQR3">
    <property type="interactions" value="2444"/>
</dbReference>
<dbReference type="STRING" id="10116.ENSRNOP00000000649"/>
<dbReference type="GlyGen" id="Q5PQR3">
    <property type="glycosylation" value="1 site"/>
</dbReference>
<dbReference type="PhosphoSitePlus" id="Q5PQR3"/>
<dbReference type="PaxDb" id="10116-ENSRNOP00000000649"/>
<dbReference type="Ensembl" id="ENSRNOT00000000649.7">
    <property type="protein sequence ID" value="ENSRNOP00000000649.6"/>
    <property type="gene ID" value="ENSRNOG00000000540.7"/>
</dbReference>
<dbReference type="GeneID" id="294318"/>
<dbReference type="KEGG" id="rno:294318"/>
<dbReference type="AGR" id="RGD:1306975"/>
<dbReference type="CTD" id="114781"/>
<dbReference type="RGD" id="1306975">
    <property type="gene designation" value="Btbd9"/>
</dbReference>
<dbReference type="eggNOG" id="KOG4350">
    <property type="taxonomic scope" value="Eukaryota"/>
</dbReference>
<dbReference type="GeneTree" id="ENSGT00940000158298"/>
<dbReference type="HOGENOM" id="CLU_004253_0_2_1"/>
<dbReference type="InParanoid" id="Q5PQR3"/>
<dbReference type="OMA" id="LCMINHI"/>
<dbReference type="OrthoDB" id="19240at9989"/>
<dbReference type="PhylomeDB" id="Q5PQR3"/>
<dbReference type="PRO" id="PR:Q5PQR3"/>
<dbReference type="Proteomes" id="UP000002494">
    <property type="component" value="Chromosome 20"/>
</dbReference>
<dbReference type="Bgee" id="ENSRNOG00000000540">
    <property type="expression patterns" value="Expressed in testis and 18 other cell types or tissues"/>
</dbReference>
<dbReference type="GO" id="GO:0005737">
    <property type="term" value="C:cytoplasm"/>
    <property type="evidence" value="ECO:0000318"/>
    <property type="project" value="GO_Central"/>
</dbReference>
<dbReference type="GO" id="GO:0098978">
    <property type="term" value="C:glutamatergic synapse"/>
    <property type="evidence" value="ECO:0000266"/>
    <property type="project" value="RGD"/>
</dbReference>
<dbReference type="GO" id="GO:0008344">
    <property type="term" value="P:adult locomotory behavior"/>
    <property type="evidence" value="ECO:0000266"/>
    <property type="project" value="RGD"/>
</dbReference>
<dbReference type="GO" id="GO:0048512">
    <property type="term" value="P:circadian behavior"/>
    <property type="evidence" value="ECO:0000266"/>
    <property type="project" value="RGD"/>
</dbReference>
<dbReference type="GO" id="GO:0042748">
    <property type="term" value="P:circadian sleep/wake cycle, non-REM sleep"/>
    <property type="evidence" value="ECO:0000266"/>
    <property type="project" value="RGD"/>
</dbReference>
<dbReference type="GO" id="GO:0007616">
    <property type="term" value="P:long-term memory"/>
    <property type="evidence" value="ECO:0000266"/>
    <property type="project" value="RGD"/>
</dbReference>
<dbReference type="GO" id="GO:0050804">
    <property type="term" value="P:modulation of chemical synaptic transmission"/>
    <property type="evidence" value="ECO:0000266"/>
    <property type="project" value="RGD"/>
</dbReference>
<dbReference type="GO" id="GO:0060586">
    <property type="term" value="P:multicellular organismal-level iron ion homeostasis"/>
    <property type="evidence" value="ECO:0000266"/>
    <property type="project" value="RGD"/>
</dbReference>
<dbReference type="GO" id="GO:1900242">
    <property type="term" value="P:regulation of synaptic vesicle endocytosis"/>
    <property type="evidence" value="ECO:0000266"/>
    <property type="project" value="RGD"/>
</dbReference>
<dbReference type="GO" id="GO:0050951">
    <property type="term" value="P:sensory perception of temperature stimulus"/>
    <property type="evidence" value="ECO:0000266"/>
    <property type="project" value="RGD"/>
</dbReference>
<dbReference type="GO" id="GO:0042428">
    <property type="term" value="P:serotonin metabolic process"/>
    <property type="evidence" value="ECO:0000266"/>
    <property type="project" value="RGD"/>
</dbReference>
<dbReference type="CDD" id="cd14822">
    <property type="entry name" value="BACK_BTBD9"/>
    <property type="match status" value="1"/>
</dbReference>
<dbReference type="CDD" id="cd18287">
    <property type="entry name" value="BTB_POZ_BTBD9"/>
    <property type="match status" value="1"/>
</dbReference>
<dbReference type="FunFam" id="1.25.40.420:FF:000005">
    <property type="entry name" value="BTB/POZ domain-containing protein 9"/>
    <property type="match status" value="1"/>
</dbReference>
<dbReference type="FunFam" id="2.60.120.260:FF:000038">
    <property type="entry name" value="BTB/POZ domain-containing protein 9"/>
    <property type="match status" value="1"/>
</dbReference>
<dbReference type="FunFam" id="2.60.120.260:FF:000051">
    <property type="entry name" value="BTB/POZ domain-containing protein 9"/>
    <property type="match status" value="1"/>
</dbReference>
<dbReference type="FunFam" id="3.30.710.10:FF:000042">
    <property type="entry name" value="BTB/POZ domain-containing protein 9"/>
    <property type="match status" value="1"/>
</dbReference>
<dbReference type="Gene3D" id="1.25.40.420">
    <property type="match status" value="1"/>
</dbReference>
<dbReference type="Gene3D" id="2.60.120.260">
    <property type="entry name" value="Galactose-binding domain-like"/>
    <property type="match status" value="2"/>
</dbReference>
<dbReference type="Gene3D" id="3.30.710.10">
    <property type="entry name" value="Potassium Channel Kv1.1, Chain A"/>
    <property type="match status" value="1"/>
</dbReference>
<dbReference type="InterPro" id="IPR011705">
    <property type="entry name" value="BACK"/>
</dbReference>
<dbReference type="InterPro" id="IPR000210">
    <property type="entry name" value="BTB/POZ_dom"/>
</dbReference>
<dbReference type="InterPro" id="IPR052407">
    <property type="entry name" value="BTB_POZ_domain_cont_9"/>
</dbReference>
<dbReference type="InterPro" id="IPR034091">
    <property type="entry name" value="BTBD9_BACK-like_dom"/>
</dbReference>
<dbReference type="InterPro" id="IPR000421">
    <property type="entry name" value="FA58C"/>
</dbReference>
<dbReference type="InterPro" id="IPR008979">
    <property type="entry name" value="Galactose-bd-like_sf"/>
</dbReference>
<dbReference type="InterPro" id="IPR011333">
    <property type="entry name" value="SKP1/BTB/POZ_sf"/>
</dbReference>
<dbReference type="PANTHER" id="PTHR46306">
    <property type="entry name" value="BTB/POZ DOMAIN-CONTAINING PROTEIN 9"/>
    <property type="match status" value="1"/>
</dbReference>
<dbReference type="PANTHER" id="PTHR46306:SF1">
    <property type="entry name" value="BTB_POZ DOMAIN-CONTAINING PROTEIN 9"/>
    <property type="match status" value="1"/>
</dbReference>
<dbReference type="Pfam" id="PF07707">
    <property type="entry name" value="BACK"/>
    <property type="match status" value="1"/>
</dbReference>
<dbReference type="Pfam" id="PF00651">
    <property type="entry name" value="BTB"/>
    <property type="match status" value="1"/>
</dbReference>
<dbReference type="Pfam" id="PF00754">
    <property type="entry name" value="F5_F8_type_C"/>
    <property type="match status" value="2"/>
</dbReference>
<dbReference type="SMART" id="SM00875">
    <property type="entry name" value="BACK"/>
    <property type="match status" value="1"/>
</dbReference>
<dbReference type="SMART" id="SM00225">
    <property type="entry name" value="BTB"/>
    <property type="match status" value="1"/>
</dbReference>
<dbReference type="SUPFAM" id="SSF49785">
    <property type="entry name" value="Galactose-binding domain-like"/>
    <property type="match status" value="2"/>
</dbReference>
<dbReference type="SUPFAM" id="SSF54695">
    <property type="entry name" value="POZ domain"/>
    <property type="match status" value="1"/>
</dbReference>
<dbReference type="PROSITE" id="PS50097">
    <property type="entry name" value="BTB"/>
    <property type="match status" value="1"/>
</dbReference>
<accession>Q5PQR3</accession>
<feature type="chain" id="PRO_0000356175" description="BTB/POZ domain-containing protein 9">
    <location>
        <begin position="1"/>
        <end position="612"/>
    </location>
</feature>
<feature type="domain" description="BTB" evidence="1">
    <location>
        <begin position="36"/>
        <end position="104"/>
    </location>
</feature>
<feature type="domain" description="BACK">
    <location>
        <begin position="142"/>
        <end position="240"/>
    </location>
</feature>
<feature type="region of interest" description="Disordered" evidence="2">
    <location>
        <begin position="559"/>
        <end position="612"/>
    </location>
</feature>
<feature type="compositionally biased region" description="Low complexity" evidence="2">
    <location>
        <begin position="589"/>
        <end position="612"/>
    </location>
</feature>
<gene>
    <name type="primary">Btbd9</name>
</gene>
<comment type="tissue specificity">
    <text evidence="3">Detected throughout the gray matter of the spinal cord including the motor neurons (at protein level). In the brain, detected in the neurons of the hippocampus and in the Purkinje cells of the cerebellum (at protein level). Also detected in the terospenial cortex, bed nucleus of the stria terminalis (BST) and the ventrolateral thalamus (VL) (at protein level).</text>
</comment>